<accession>Q196X7</accession>
<organismHost>
    <name type="scientific">Aedes vexans</name>
    <name type="common">Inland floodwater mosquito</name>
    <name type="synonym">Culex vexans</name>
    <dbReference type="NCBI Taxonomy" id="7163"/>
</organismHost>
<organismHost>
    <name type="scientific">Culex territans</name>
    <dbReference type="NCBI Taxonomy" id="42431"/>
</organismHost>
<organismHost>
    <name type="scientific">Culiseta annulata</name>
    <dbReference type="NCBI Taxonomy" id="332058"/>
</organismHost>
<organismHost>
    <name type="scientific">Ochlerotatus sollicitans</name>
    <name type="common">eastern saltmarsh mosquito</name>
    <dbReference type="NCBI Taxonomy" id="310513"/>
</organismHost>
<organismHost>
    <name type="scientific">Ochlerotatus taeniorhynchus</name>
    <name type="common">Black salt marsh mosquito</name>
    <name type="synonym">Aedes taeniorhynchus</name>
    <dbReference type="NCBI Taxonomy" id="329105"/>
</organismHost>
<organismHost>
    <name type="scientific">Psorophora ferox</name>
    <dbReference type="NCBI Taxonomy" id="7183"/>
</organismHost>
<evidence type="ECO:0000305" key="1"/>
<reference key="1">
    <citation type="journal article" date="2006" name="J. Virol.">
        <title>Genome of invertebrate iridescent virus type 3 (mosquito iridescent virus).</title>
        <authorList>
            <person name="Delhon G."/>
            <person name="Tulman E.R."/>
            <person name="Afonso C.L."/>
            <person name="Lu Z."/>
            <person name="Becnel J.J."/>
            <person name="Moser B.A."/>
            <person name="Kutish G.F."/>
            <person name="Rock D.L."/>
        </authorList>
    </citation>
    <scope>NUCLEOTIDE SEQUENCE [LARGE SCALE GENOMIC DNA]</scope>
</reference>
<dbReference type="EMBL" id="DQ643392">
    <property type="protein sequence ID" value="ABF82113.1"/>
    <property type="molecule type" value="Genomic_DNA"/>
</dbReference>
<dbReference type="RefSeq" id="YP_654655.1">
    <property type="nucleotide sequence ID" value="NC_008187.1"/>
</dbReference>
<dbReference type="KEGG" id="vg:4156294"/>
<dbReference type="OrthoDB" id="27688at10239"/>
<dbReference type="Proteomes" id="UP000001358">
    <property type="component" value="Genome"/>
</dbReference>
<comment type="similarity">
    <text evidence="1">Belongs to the IIV-6 358L family.</text>
</comment>
<organism>
    <name type="scientific">Invertebrate iridescent virus 3</name>
    <name type="common">IIV-3</name>
    <name type="synonym">Mosquito iridescent virus</name>
    <dbReference type="NCBI Taxonomy" id="345201"/>
    <lineage>
        <taxon>Viruses</taxon>
        <taxon>Varidnaviria</taxon>
        <taxon>Bamfordvirae</taxon>
        <taxon>Nucleocytoviricota</taxon>
        <taxon>Megaviricetes</taxon>
        <taxon>Pimascovirales</taxon>
        <taxon>Iridoviridae</taxon>
        <taxon>Betairidovirinae</taxon>
        <taxon>Chloriridovirus</taxon>
    </lineage>
</organism>
<proteinExistence type="inferred from homology"/>
<protein>
    <recommendedName>
        <fullName>Uncharacterized protein 083L</fullName>
    </recommendedName>
</protein>
<sequence>MDYALEQAIKTNLVLLVEFILEKHPTIERHTVYQKVEQLTSIQLGKVSSAKQSSKSTTTTTPKTGGRKKIRDAIERKKATIIVRKSQWSNYVLTVPDECHNDENLTDLIESNFVMDVTTKTIVATETKDGALRPLNRETIDICNKHKLRYEVPLNLNLYDNEDSTDAALVTEMEELGLTYASSDDEEEKNQN</sequence>
<keyword id="KW-1185">Reference proteome</keyword>
<gene>
    <name type="ORF">IIV3-083L</name>
</gene>
<name>VF358_IIV3</name>
<feature type="chain" id="PRO_0000377789" description="Uncharacterized protein 083L">
    <location>
        <begin position="1"/>
        <end position="192"/>
    </location>
</feature>